<reference key="1">
    <citation type="journal article" date="2006" name="Genome Res.">
        <title>Skewed genomic variability in strains of the toxigenic bacterial pathogen, Clostridium perfringens.</title>
        <authorList>
            <person name="Myers G.S.A."/>
            <person name="Rasko D.A."/>
            <person name="Cheung J.K."/>
            <person name="Ravel J."/>
            <person name="Seshadri R."/>
            <person name="DeBoy R.T."/>
            <person name="Ren Q."/>
            <person name="Varga J."/>
            <person name="Awad M.M."/>
            <person name="Brinkac L.M."/>
            <person name="Daugherty S.C."/>
            <person name="Haft D.H."/>
            <person name="Dodson R.J."/>
            <person name="Madupu R."/>
            <person name="Nelson W.C."/>
            <person name="Rosovitz M.J."/>
            <person name="Sullivan S.A."/>
            <person name="Khouri H."/>
            <person name="Dimitrov G.I."/>
            <person name="Watkins K.L."/>
            <person name="Mulligan S."/>
            <person name="Benton J."/>
            <person name="Radune D."/>
            <person name="Fisher D.J."/>
            <person name="Atkins H.S."/>
            <person name="Hiscox T."/>
            <person name="Jost B.H."/>
            <person name="Billington S.J."/>
            <person name="Songer J.G."/>
            <person name="McClane B.A."/>
            <person name="Titball R.W."/>
            <person name="Rood J.I."/>
            <person name="Melville S.B."/>
            <person name="Paulsen I.T."/>
        </authorList>
    </citation>
    <scope>NUCLEOTIDE SEQUENCE [LARGE SCALE GENOMIC DNA]</scope>
    <source>
        <strain>SM101 / Type A</strain>
    </source>
</reference>
<proteinExistence type="inferred from homology"/>
<organism>
    <name type="scientific">Clostridium perfringens (strain SM101 / Type A)</name>
    <dbReference type="NCBI Taxonomy" id="289380"/>
    <lineage>
        <taxon>Bacteria</taxon>
        <taxon>Bacillati</taxon>
        <taxon>Bacillota</taxon>
        <taxon>Clostridia</taxon>
        <taxon>Eubacteriales</taxon>
        <taxon>Clostridiaceae</taxon>
        <taxon>Clostridium</taxon>
    </lineage>
</organism>
<sequence>MKKYKIIMTGGGSAGHVTPNLALVPKLKELGFEIKYIGSKNGIEKEIITKENIPYYSISSGKLRRYFDIKNFTDPFKVLKGVMDASRILSKEKPDVIFSKGGFVTVPVVIAASMKKIPVVSHESDLTPGLANKIASPFCDTLCVTFPESLKYIKDNKGKLTGTPIREDLLKGDKERGRKFCNFKENKKVLMIIGGSLGSKIINESVRKILNEILKEYNVIHLCGKGNLDESLKNLEGYRQYEYISEELPDLMALADLVISRAGANTIFELLALRKLNILIPLSANASRGDQVLNANSFEKSGYSMVIKEEELNSELLLKSIKDLEKNREKYLNSMKMSKIGNGVNNIIDIIKKSAHM</sequence>
<gene>
    <name evidence="1" type="primary">murG</name>
    <name type="ordered locus">CPR_2034</name>
</gene>
<keyword id="KW-0131">Cell cycle</keyword>
<keyword id="KW-0132">Cell division</keyword>
<keyword id="KW-1003">Cell membrane</keyword>
<keyword id="KW-0133">Cell shape</keyword>
<keyword id="KW-0961">Cell wall biogenesis/degradation</keyword>
<keyword id="KW-0328">Glycosyltransferase</keyword>
<keyword id="KW-0472">Membrane</keyword>
<keyword id="KW-0573">Peptidoglycan synthesis</keyword>
<keyword id="KW-0808">Transferase</keyword>
<comment type="function">
    <text evidence="1">Cell wall formation. Catalyzes the transfer of a GlcNAc subunit on undecaprenyl-pyrophosphoryl-MurNAc-pentapeptide (lipid intermediate I) to form undecaprenyl-pyrophosphoryl-MurNAc-(pentapeptide)GlcNAc (lipid intermediate II).</text>
</comment>
<comment type="catalytic activity">
    <reaction evidence="1">
        <text>di-trans,octa-cis-undecaprenyl diphospho-N-acetyl-alpha-D-muramoyl-L-alanyl-D-glutamyl-meso-2,6-diaminopimeloyl-D-alanyl-D-alanine + UDP-N-acetyl-alpha-D-glucosamine = di-trans,octa-cis-undecaprenyl diphospho-[N-acetyl-alpha-D-glucosaminyl-(1-&gt;4)]-N-acetyl-alpha-D-muramoyl-L-alanyl-D-glutamyl-meso-2,6-diaminopimeloyl-D-alanyl-D-alanine + UDP + H(+)</text>
        <dbReference type="Rhea" id="RHEA:31227"/>
        <dbReference type="ChEBI" id="CHEBI:15378"/>
        <dbReference type="ChEBI" id="CHEBI:57705"/>
        <dbReference type="ChEBI" id="CHEBI:58223"/>
        <dbReference type="ChEBI" id="CHEBI:61387"/>
        <dbReference type="ChEBI" id="CHEBI:61388"/>
        <dbReference type="EC" id="2.4.1.227"/>
    </reaction>
</comment>
<comment type="pathway">
    <text evidence="1">Cell wall biogenesis; peptidoglycan biosynthesis.</text>
</comment>
<comment type="subcellular location">
    <subcellularLocation>
        <location evidence="1">Cell membrane</location>
        <topology evidence="1">Peripheral membrane protein</topology>
        <orientation evidence="1">Cytoplasmic side</orientation>
    </subcellularLocation>
</comment>
<comment type="similarity">
    <text evidence="1">Belongs to the glycosyltransferase 28 family. MurG subfamily.</text>
</comment>
<protein>
    <recommendedName>
        <fullName evidence="1">UDP-N-acetylglucosamine--N-acetylmuramyl-(pentapeptide) pyrophosphoryl-undecaprenol N-acetylglucosamine transferase</fullName>
        <ecNumber evidence="1">2.4.1.227</ecNumber>
    </recommendedName>
    <alternativeName>
        <fullName evidence="1">Undecaprenyl-PP-MurNAc-pentapeptide-UDPGlcNAc GlcNAc transferase</fullName>
    </alternativeName>
</protein>
<feature type="chain" id="PRO_1000002637" description="UDP-N-acetylglucosamine--N-acetylmuramyl-(pentapeptide) pyrophosphoryl-undecaprenol N-acetylglucosamine transferase">
    <location>
        <begin position="1"/>
        <end position="357"/>
    </location>
</feature>
<feature type="binding site" evidence="1">
    <location>
        <begin position="13"/>
        <end position="15"/>
    </location>
    <ligand>
        <name>UDP-N-acetyl-alpha-D-glucosamine</name>
        <dbReference type="ChEBI" id="CHEBI:57705"/>
    </ligand>
</feature>
<feature type="binding site" evidence="1">
    <location>
        <position position="166"/>
    </location>
    <ligand>
        <name>UDP-N-acetyl-alpha-D-glucosamine</name>
        <dbReference type="ChEBI" id="CHEBI:57705"/>
    </ligand>
</feature>
<feature type="binding site" evidence="1">
    <location>
        <position position="196"/>
    </location>
    <ligand>
        <name>UDP-N-acetyl-alpha-D-glucosamine</name>
        <dbReference type="ChEBI" id="CHEBI:57705"/>
    </ligand>
</feature>
<feature type="binding site" evidence="1">
    <location>
        <position position="291"/>
    </location>
    <ligand>
        <name>UDP-N-acetyl-alpha-D-glucosamine</name>
        <dbReference type="ChEBI" id="CHEBI:57705"/>
    </ligand>
</feature>
<accession>Q0SRB4</accession>
<evidence type="ECO:0000255" key="1">
    <source>
        <dbReference type="HAMAP-Rule" id="MF_00033"/>
    </source>
</evidence>
<name>MURG_CLOPS</name>
<dbReference type="EC" id="2.4.1.227" evidence="1"/>
<dbReference type="EMBL" id="CP000312">
    <property type="protein sequence ID" value="ABG86484.1"/>
    <property type="molecule type" value="Genomic_DNA"/>
</dbReference>
<dbReference type="RefSeq" id="WP_011592883.1">
    <property type="nucleotide sequence ID" value="NC_008262.1"/>
</dbReference>
<dbReference type="SMR" id="Q0SRB4"/>
<dbReference type="CAZy" id="GT28">
    <property type="family name" value="Glycosyltransferase Family 28"/>
</dbReference>
<dbReference type="KEGG" id="cpr:CPR_2034"/>
<dbReference type="UniPathway" id="UPA00219"/>
<dbReference type="Proteomes" id="UP000001824">
    <property type="component" value="Chromosome"/>
</dbReference>
<dbReference type="GO" id="GO:0005886">
    <property type="term" value="C:plasma membrane"/>
    <property type="evidence" value="ECO:0007669"/>
    <property type="project" value="UniProtKB-SubCell"/>
</dbReference>
<dbReference type="GO" id="GO:0051991">
    <property type="term" value="F:UDP-N-acetyl-D-glucosamine:N-acetylmuramoyl-L-alanyl-D-glutamyl-meso-2,6-diaminopimelyl-D-alanyl-D-alanine-diphosphoundecaprenol 4-beta-N-acetylglucosaminlytransferase activity"/>
    <property type="evidence" value="ECO:0007669"/>
    <property type="project" value="RHEA"/>
</dbReference>
<dbReference type="GO" id="GO:0050511">
    <property type="term" value="F:undecaprenyldiphospho-muramoylpentapeptide beta-N-acetylglucosaminyltransferase activity"/>
    <property type="evidence" value="ECO:0007669"/>
    <property type="project" value="UniProtKB-UniRule"/>
</dbReference>
<dbReference type="GO" id="GO:0005975">
    <property type="term" value="P:carbohydrate metabolic process"/>
    <property type="evidence" value="ECO:0007669"/>
    <property type="project" value="InterPro"/>
</dbReference>
<dbReference type="GO" id="GO:0051301">
    <property type="term" value="P:cell division"/>
    <property type="evidence" value="ECO:0007669"/>
    <property type="project" value="UniProtKB-KW"/>
</dbReference>
<dbReference type="GO" id="GO:0071555">
    <property type="term" value="P:cell wall organization"/>
    <property type="evidence" value="ECO:0007669"/>
    <property type="project" value="UniProtKB-KW"/>
</dbReference>
<dbReference type="GO" id="GO:0030259">
    <property type="term" value="P:lipid glycosylation"/>
    <property type="evidence" value="ECO:0007669"/>
    <property type="project" value="UniProtKB-UniRule"/>
</dbReference>
<dbReference type="GO" id="GO:0009252">
    <property type="term" value="P:peptidoglycan biosynthetic process"/>
    <property type="evidence" value="ECO:0007669"/>
    <property type="project" value="UniProtKB-UniRule"/>
</dbReference>
<dbReference type="GO" id="GO:0008360">
    <property type="term" value="P:regulation of cell shape"/>
    <property type="evidence" value="ECO:0007669"/>
    <property type="project" value="UniProtKB-KW"/>
</dbReference>
<dbReference type="CDD" id="cd03785">
    <property type="entry name" value="GT28_MurG"/>
    <property type="match status" value="1"/>
</dbReference>
<dbReference type="Gene3D" id="3.40.50.2000">
    <property type="entry name" value="Glycogen Phosphorylase B"/>
    <property type="match status" value="2"/>
</dbReference>
<dbReference type="HAMAP" id="MF_00033">
    <property type="entry name" value="MurG"/>
    <property type="match status" value="1"/>
</dbReference>
<dbReference type="InterPro" id="IPR006009">
    <property type="entry name" value="GlcNAc_MurG"/>
</dbReference>
<dbReference type="InterPro" id="IPR007235">
    <property type="entry name" value="Glyco_trans_28_C"/>
</dbReference>
<dbReference type="InterPro" id="IPR004276">
    <property type="entry name" value="GlycoTrans_28_N"/>
</dbReference>
<dbReference type="NCBIfam" id="TIGR01133">
    <property type="entry name" value="murG"/>
    <property type="match status" value="1"/>
</dbReference>
<dbReference type="NCBIfam" id="NF009102">
    <property type="entry name" value="PRK12446.1"/>
    <property type="match status" value="1"/>
</dbReference>
<dbReference type="PANTHER" id="PTHR21015:SF27">
    <property type="entry name" value="UDP-N-ACETYLGLUCOSAMINE--N-ACETYLMURAMYL-(PENTAPEPTIDE) PYROPHOSPHORYL-UNDECAPRENOL N-ACETYLGLUCOSAMINE TRANSFERASE"/>
    <property type="match status" value="1"/>
</dbReference>
<dbReference type="PANTHER" id="PTHR21015">
    <property type="entry name" value="UDP-N-ACETYLGLUCOSAMINE--N-ACETYLMURAMYL-(PENTAPEPTIDE) PYROPHOSPHORYL-UNDECAPRENOL N-ACETYLGLUCOSAMINE TRANSFERASE 1"/>
    <property type="match status" value="1"/>
</dbReference>
<dbReference type="Pfam" id="PF04101">
    <property type="entry name" value="Glyco_tran_28_C"/>
    <property type="match status" value="1"/>
</dbReference>
<dbReference type="Pfam" id="PF03033">
    <property type="entry name" value="Glyco_transf_28"/>
    <property type="match status" value="1"/>
</dbReference>
<dbReference type="SUPFAM" id="SSF53756">
    <property type="entry name" value="UDP-Glycosyltransferase/glycogen phosphorylase"/>
    <property type="match status" value="1"/>
</dbReference>